<keyword id="KW-0001">2Fe-2S</keyword>
<keyword id="KW-0003">3Fe-4S</keyword>
<keyword id="KW-0004">4Fe-4S</keyword>
<keyword id="KW-0249">Electron transport</keyword>
<keyword id="KW-0408">Iron</keyword>
<keyword id="KW-0411">Iron-sulfur</keyword>
<keyword id="KW-0472">Membrane</keyword>
<keyword id="KW-0479">Metal-binding</keyword>
<keyword id="KW-0496">Mitochondrion</keyword>
<keyword id="KW-0999">Mitochondrion inner membrane</keyword>
<keyword id="KW-0560">Oxidoreductase</keyword>
<keyword id="KW-0809">Transit peptide</keyword>
<keyword id="KW-0813">Transport</keyword>
<keyword id="KW-0816">Tricarboxylic acid cycle</keyword>
<accession>O42772</accession>
<gene>
    <name type="primary">SDH2</name>
</gene>
<name>SDHB_ZYMTR</name>
<protein>
    <recommendedName>
        <fullName>Succinate dehydrogenase [ubiquinone] iron-sulfur subunit, mitochondrial</fullName>
        <ecNumber>1.3.5.1</ecNumber>
    </recommendedName>
    <alternativeName>
        <fullName>Iron-sulfur subunit of complex II</fullName>
        <shortName>Ip</shortName>
    </alternativeName>
</protein>
<comment type="function">
    <text evidence="1">Iron-sulfur protein (IP) subunit of succinate dehydrogenase (SDH) that is involved in complex II of the mitochondrial electron transport chain and is responsible for transferring electrons from succinate to ubiquinone (coenzyme Q).</text>
</comment>
<comment type="catalytic activity">
    <reaction>
        <text>a quinone + succinate = fumarate + a quinol</text>
        <dbReference type="Rhea" id="RHEA:40523"/>
        <dbReference type="ChEBI" id="CHEBI:24646"/>
        <dbReference type="ChEBI" id="CHEBI:29806"/>
        <dbReference type="ChEBI" id="CHEBI:30031"/>
        <dbReference type="ChEBI" id="CHEBI:132124"/>
        <dbReference type="EC" id="1.3.5.1"/>
    </reaction>
</comment>
<comment type="cofactor">
    <cofactor evidence="1">
        <name>[2Fe-2S] cluster</name>
        <dbReference type="ChEBI" id="CHEBI:190135"/>
    </cofactor>
    <text evidence="1">Binds 1 [2Fe-2S] cluster.</text>
</comment>
<comment type="cofactor">
    <cofactor evidence="1">
        <name>[3Fe-4S] cluster</name>
        <dbReference type="ChEBI" id="CHEBI:21137"/>
    </cofactor>
    <text evidence="1">Binds 1 [3Fe-4S] cluster.</text>
</comment>
<comment type="cofactor">
    <cofactor evidence="1">
        <name>[4Fe-4S] cluster</name>
        <dbReference type="ChEBI" id="CHEBI:49883"/>
    </cofactor>
    <text evidence="1">Binds 1 [4Fe-4S] cluster.</text>
</comment>
<comment type="pathway">
    <text>Carbohydrate metabolism; tricarboxylic acid cycle; fumarate from succinate (eukaryal route): step 1/1.</text>
</comment>
<comment type="subunit">
    <text evidence="1">Component of complex II composed of four subunits: a flavoprotein (FP), an iron-sulfur protein (IP), and a cytochrome b composed of a large and a small subunit.</text>
</comment>
<comment type="subcellular location">
    <subcellularLocation>
        <location evidence="1">Mitochondrion inner membrane</location>
        <topology evidence="1">Peripheral membrane protein</topology>
        <orientation evidence="1">Matrix side</orientation>
    </subcellularLocation>
</comment>
<comment type="similarity">
    <text evidence="6">Belongs to the succinate dehydrogenase/fumarate reductase iron-sulfur protein family.</text>
</comment>
<proteinExistence type="inferred from homology"/>
<reference key="1">
    <citation type="journal article" date="1998" name="Curr. Genet.">
        <title>A single amino-acid substitution in the iron-sulphur protein subunit of succinate dehydrogenase determines resistance to carboxin in Mycosphaerella graminicola.</title>
        <authorList>
            <person name="Skinner W."/>
            <person name="Bailey A.M."/>
            <person name="Renwick A."/>
            <person name="Keon J.P.R."/>
            <person name="Gurr S.J."/>
            <person name="Hargreaves J.A."/>
        </authorList>
    </citation>
    <scope>NUCLEOTIDE SEQUENCE [GENOMIC DNA]</scope>
</reference>
<feature type="transit peptide" description="Mitochondrion" evidence="2">
    <location>
        <begin position="1"/>
        <end status="unknown"/>
    </location>
</feature>
<feature type="chain" id="PRO_0000010349" description="Succinate dehydrogenase [ubiquinone] iron-sulfur subunit, mitochondrial">
    <location>
        <begin status="unknown"/>
        <end position="297"/>
    </location>
</feature>
<feature type="domain" description="2Fe-2S ferredoxin-type" evidence="3">
    <location>
        <begin position="78"/>
        <end position="157"/>
    </location>
</feature>
<feature type="domain" description="4Fe-4S ferredoxin-type" evidence="4">
    <location>
        <begin position="199"/>
        <end position="229"/>
    </location>
</feature>
<feature type="region of interest" description="Disordered" evidence="5">
    <location>
        <begin position="33"/>
        <end position="55"/>
    </location>
</feature>
<feature type="binding site" evidence="1">
    <location>
        <position position="117"/>
    </location>
    <ligand>
        <name>[2Fe-2S] cluster</name>
        <dbReference type="ChEBI" id="CHEBI:190135"/>
    </ligand>
</feature>
<feature type="binding site" evidence="1">
    <location>
        <position position="122"/>
    </location>
    <ligand>
        <name>[2Fe-2S] cluster</name>
        <dbReference type="ChEBI" id="CHEBI:190135"/>
    </ligand>
</feature>
<feature type="binding site" evidence="1">
    <location>
        <position position="125"/>
    </location>
    <ligand>
        <name>[2Fe-2S] cluster</name>
        <dbReference type="ChEBI" id="CHEBI:190135"/>
    </ligand>
</feature>
<feature type="binding site" evidence="1">
    <location>
        <position position="137"/>
    </location>
    <ligand>
        <name>[2Fe-2S] cluster</name>
        <dbReference type="ChEBI" id="CHEBI:190135"/>
    </ligand>
</feature>
<feature type="binding site" evidence="1">
    <location>
        <position position="209"/>
    </location>
    <ligand>
        <name>[4Fe-4S] cluster</name>
        <dbReference type="ChEBI" id="CHEBI:49883"/>
    </ligand>
</feature>
<feature type="binding site" evidence="1">
    <location>
        <position position="212"/>
    </location>
    <ligand>
        <name>[4Fe-4S] cluster</name>
        <dbReference type="ChEBI" id="CHEBI:49883"/>
    </ligand>
</feature>
<feature type="binding site" evidence="1">
    <location>
        <position position="215"/>
    </location>
    <ligand>
        <name>[4Fe-4S] cluster</name>
        <dbReference type="ChEBI" id="CHEBI:49883"/>
    </ligand>
</feature>
<feature type="binding site" evidence="1">
    <location>
        <position position="219"/>
    </location>
    <ligand>
        <name>[3Fe-4S] cluster</name>
        <dbReference type="ChEBI" id="CHEBI:21137"/>
    </ligand>
</feature>
<feature type="binding site" evidence="1">
    <location>
        <position position="224"/>
    </location>
    <ligand>
        <name>a ubiquinone</name>
        <dbReference type="ChEBI" id="CHEBI:16389"/>
        <note>ligand shared with DHSD</note>
    </ligand>
</feature>
<feature type="binding site" evidence="1">
    <location>
        <position position="266"/>
    </location>
    <ligand>
        <name>[3Fe-4S] cluster</name>
        <dbReference type="ChEBI" id="CHEBI:21137"/>
    </ligand>
</feature>
<feature type="binding site" evidence="1">
    <location>
        <position position="272"/>
    </location>
    <ligand>
        <name>[3Fe-4S] cluster</name>
        <dbReference type="ChEBI" id="CHEBI:21137"/>
    </ligand>
</feature>
<feature type="binding site" evidence="1">
    <location>
        <position position="276"/>
    </location>
    <ligand>
        <name>[4Fe-4S] cluster</name>
        <dbReference type="ChEBI" id="CHEBI:49883"/>
    </ligand>
</feature>
<sequence>MALRLATRRFAPIAFRRGMATTIEHTKEPISATAEALSASRPPIKETKTSTVKEPQMDADAKTKTFHIYRWNPDQPTDKPRMQSYTLDLNKTGPMMLDALIRIKNEVDPTLTFRRSCREGICGSCAMNIDGVNTLACLCRIPTDTAKETRIYPLPHTYVVKDLVPDMTQFYKQYKSIKPYLQRDTAPPDGKENRQSVADRKKLDGLYECILCACCSTSCPSYWWNSEEYLGPAVLLQSYRWINDSRDEKTAQRKDALNNSMSLYRCHTILNCSRTCPKGLNPALAIAEIKKSMAFTG</sequence>
<organism>
    <name type="scientific">Zymoseptoria tritici</name>
    <name type="common">Speckled leaf blotch fungus</name>
    <name type="synonym">Septoria tritici</name>
    <dbReference type="NCBI Taxonomy" id="1047171"/>
    <lineage>
        <taxon>Eukaryota</taxon>
        <taxon>Fungi</taxon>
        <taxon>Dikarya</taxon>
        <taxon>Ascomycota</taxon>
        <taxon>Pezizomycotina</taxon>
        <taxon>Dothideomycetes</taxon>
        <taxon>Dothideomycetidae</taxon>
        <taxon>Mycosphaerellales</taxon>
        <taxon>Mycosphaerellaceae</taxon>
        <taxon>Zymoseptoria</taxon>
    </lineage>
</organism>
<dbReference type="EC" id="1.3.5.1"/>
<dbReference type="EMBL" id="AF042062">
    <property type="protein sequence ID" value="AAB97419.1"/>
    <property type="molecule type" value="Genomic_DNA"/>
</dbReference>
<dbReference type="SMR" id="O42772"/>
<dbReference type="BindingDB" id="O42772"/>
<dbReference type="ChEMBL" id="CHEMBL613815"/>
<dbReference type="VEuPathDB" id="FungiDB:ZT3D1_G7673"/>
<dbReference type="VEuPathDB" id="FungiDB:ZTRI_7.463"/>
<dbReference type="OMA" id="DGQYFGP"/>
<dbReference type="UniPathway" id="UPA00223">
    <property type="reaction ID" value="UER01006"/>
</dbReference>
<dbReference type="PHI-base" id="PHI:822"/>
<dbReference type="GO" id="GO:0005743">
    <property type="term" value="C:mitochondrial inner membrane"/>
    <property type="evidence" value="ECO:0007669"/>
    <property type="project" value="UniProtKB-SubCell"/>
</dbReference>
<dbReference type="GO" id="GO:0051537">
    <property type="term" value="F:2 iron, 2 sulfur cluster binding"/>
    <property type="evidence" value="ECO:0007669"/>
    <property type="project" value="UniProtKB-KW"/>
</dbReference>
<dbReference type="GO" id="GO:0051538">
    <property type="term" value="F:3 iron, 4 sulfur cluster binding"/>
    <property type="evidence" value="ECO:0007669"/>
    <property type="project" value="UniProtKB-KW"/>
</dbReference>
<dbReference type="GO" id="GO:0051539">
    <property type="term" value="F:4 iron, 4 sulfur cluster binding"/>
    <property type="evidence" value="ECO:0007669"/>
    <property type="project" value="UniProtKB-KW"/>
</dbReference>
<dbReference type="GO" id="GO:0009055">
    <property type="term" value="F:electron transfer activity"/>
    <property type="evidence" value="ECO:0007669"/>
    <property type="project" value="InterPro"/>
</dbReference>
<dbReference type="GO" id="GO:0046872">
    <property type="term" value="F:metal ion binding"/>
    <property type="evidence" value="ECO:0007669"/>
    <property type="project" value="UniProtKB-KW"/>
</dbReference>
<dbReference type="GO" id="GO:0008177">
    <property type="term" value="F:succinate dehydrogenase (quinone) activity"/>
    <property type="evidence" value="ECO:0000304"/>
    <property type="project" value="PHI-base"/>
</dbReference>
<dbReference type="GO" id="GO:0022904">
    <property type="term" value="P:respiratory electron transport chain"/>
    <property type="evidence" value="ECO:0007669"/>
    <property type="project" value="TreeGrafter"/>
</dbReference>
<dbReference type="GO" id="GO:0006099">
    <property type="term" value="P:tricarboxylic acid cycle"/>
    <property type="evidence" value="ECO:0007669"/>
    <property type="project" value="UniProtKB-UniPathway"/>
</dbReference>
<dbReference type="FunFam" id="3.10.20.30:FF:000007">
    <property type="entry name" value="Succinate dehydrogenase [ubiquinone] iron-sulfur subunit, mitochondrial"/>
    <property type="match status" value="1"/>
</dbReference>
<dbReference type="FunFam" id="1.10.1060.10:FF:000001">
    <property type="entry name" value="Succinate dehydrogenase iron-sulfur subunit SdhB"/>
    <property type="match status" value="1"/>
</dbReference>
<dbReference type="Gene3D" id="3.10.20.30">
    <property type="match status" value="1"/>
</dbReference>
<dbReference type="Gene3D" id="1.10.1060.10">
    <property type="entry name" value="Alpha-helical ferredoxin"/>
    <property type="match status" value="1"/>
</dbReference>
<dbReference type="InterPro" id="IPR036010">
    <property type="entry name" value="2Fe-2S_ferredoxin-like_sf"/>
</dbReference>
<dbReference type="InterPro" id="IPR001041">
    <property type="entry name" value="2Fe-2S_ferredoxin-type"/>
</dbReference>
<dbReference type="InterPro" id="IPR006058">
    <property type="entry name" value="2Fe2S_fd_BS"/>
</dbReference>
<dbReference type="InterPro" id="IPR017896">
    <property type="entry name" value="4Fe4S_Fe-S-bd"/>
</dbReference>
<dbReference type="InterPro" id="IPR017900">
    <property type="entry name" value="4Fe4S_Fe_S_CS"/>
</dbReference>
<dbReference type="InterPro" id="IPR012675">
    <property type="entry name" value="Beta-grasp_dom_sf"/>
</dbReference>
<dbReference type="InterPro" id="IPR009051">
    <property type="entry name" value="Helical_ferredxn"/>
</dbReference>
<dbReference type="InterPro" id="IPR050573">
    <property type="entry name" value="SDH/FRD_Iron-Sulfur"/>
</dbReference>
<dbReference type="InterPro" id="IPR004489">
    <property type="entry name" value="Succ_DH/fum_Rdtase_Fe-S"/>
</dbReference>
<dbReference type="InterPro" id="IPR025192">
    <property type="entry name" value="Succ_DH/fum_Rdtase_N"/>
</dbReference>
<dbReference type="NCBIfam" id="TIGR00384">
    <property type="entry name" value="dhsB"/>
    <property type="match status" value="1"/>
</dbReference>
<dbReference type="NCBIfam" id="NF004616">
    <property type="entry name" value="PRK05950.1"/>
    <property type="match status" value="1"/>
</dbReference>
<dbReference type="PANTHER" id="PTHR11921:SF29">
    <property type="entry name" value="SUCCINATE DEHYDROGENASE [UBIQUINONE] IRON-SULFUR SUBUNIT, MITOCHONDRIAL"/>
    <property type="match status" value="1"/>
</dbReference>
<dbReference type="PANTHER" id="PTHR11921">
    <property type="entry name" value="SUCCINATE DEHYDROGENASE IRON-SULFUR PROTEIN"/>
    <property type="match status" value="1"/>
</dbReference>
<dbReference type="Pfam" id="PF13085">
    <property type="entry name" value="Fer2_3"/>
    <property type="match status" value="1"/>
</dbReference>
<dbReference type="Pfam" id="PF13534">
    <property type="entry name" value="Fer4_17"/>
    <property type="match status" value="1"/>
</dbReference>
<dbReference type="SUPFAM" id="SSF54292">
    <property type="entry name" value="2Fe-2S ferredoxin-like"/>
    <property type="match status" value="1"/>
</dbReference>
<dbReference type="SUPFAM" id="SSF46548">
    <property type="entry name" value="alpha-helical ferredoxin"/>
    <property type="match status" value="1"/>
</dbReference>
<dbReference type="PROSITE" id="PS00197">
    <property type="entry name" value="2FE2S_FER_1"/>
    <property type="match status" value="1"/>
</dbReference>
<dbReference type="PROSITE" id="PS51085">
    <property type="entry name" value="2FE2S_FER_2"/>
    <property type="match status" value="1"/>
</dbReference>
<dbReference type="PROSITE" id="PS00198">
    <property type="entry name" value="4FE4S_FER_1"/>
    <property type="match status" value="1"/>
</dbReference>
<dbReference type="PROSITE" id="PS51379">
    <property type="entry name" value="4FE4S_FER_2"/>
    <property type="match status" value="1"/>
</dbReference>
<evidence type="ECO:0000250" key="1"/>
<evidence type="ECO:0000255" key="2"/>
<evidence type="ECO:0000255" key="3">
    <source>
        <dbReference type="PROSITE-ProRule" id="PRU00465"/>
    </source>
</evidence>
<evidence type="ECO:0000255" key="4">
    <source>
        <dbReference type="PROSITE-ProRule" id="PRU00711"/>
    </source>
</evidence>
<evidence type="ECO:0000256" key="5">
    <source>
        <dbReference type="SAM" id="MobiDB-lite"/>
    </source>
</evidence>
<evidence type="ECO:0000305" key="6"/>